<proteinExistence type="evidence at transcript level"/>
<feature type="chain" id="PRO_0000200189" description="Homeobox protein Hox-C9">
    <location>
        <begin position="1"/>
        <end position="262"/>
    </location>
</feature>
<feature type="DNA-binding region" description="Homeobox" evidence="2">
    <location>
        <begin position="194"/>
        <end position="253"/>
    </location>
</feature>
<feature type="region of interest" description="Disordered" evidence="3">
    <location>
        <begin position="152"/>
        <end position="185"/>
    </location>
</feature>
<protein>
    <recommendedName>
        <fullName>Homeobox protein Hox-C9</fullName>
    </recommendedName>
</protein>
<reference key="1">
    <citation type="submission" date="1999-05" db="EMBL/GenBank/DDBJ databases">
        <title>Hox genes of the medakafish Oryzias latipes.</title>
        <authorList>
            <person name="Kondo S."/>
            <person name="Naruse K."/>
            <person name="Shima A."/>
        </authorList>
    </citation>
    <scope>NUCLEOTIDE SEQUENCE [MRNA]</scope>
</reference>
<organism>
    <name type="scientific">Oryzias latipes</name>
    <name type="common">Japanese rice fish</name>
    <name type="synonym">Japanese killifish</name>
    <dbReference type="NCBI Taxonomy" id="8090"/>
    <lineage>
        <taxon>Eukaryota</taxon>
        <taxon>Metazoa</taxon>
        <taxon>Chordata</taxon>
        <taxon>Craniata</taxon>
        <taxon>Vertebrata</taxon>
        <taxon>Euteleostomi</taxon>
        <taxon>Actinopterygii</taxon>
        <taxon>Neopterygii</taxon>
        <taxon>Teleostei</taxon>
        <taxon>Neoteleostei</taxon>
        <taxon>Acanthomorphata</taxon>
        <taxon>Ovalentaria</taxon>
        <taxon>Atherinomorphae</taxon>
        <taxon>Beloniformes</taxon>
        <taxon>Adrianichthyidae</taxon>
        <taxon>Oryziinae</taxon>
        <taxon>Oryzias</taxon>
    </lineage>
</organism>
<comment type="function">
    <text evidence="1">Sequence-specific transcription factor which is part of a developmental regulatory system that provides cells with specific positional identities on the anterior-posterior axis.</text>
</comment>
<comment type="subcellular location">
    <subcellularLocation>
        <location evidence="2">Nucleus</location>
    </subcellularLocation>
</comment>
<comment type="similarity">
    <text evidence="4">Belongs to the Abd-B homeobox family.</text>
</comment>
<dbReference type="EMBL" id="AB026970">
    <property type="protein sequence ID" value="BAA86253.1"/>
    <property type="molecule type" value="mRNA"/>
</dbReference>
<dbReference type="RefSeq" id="NP_001188421.1">
    <property type="nucleotide sequence ID" value="NM_001201492.1"/>
</dbReference>
<dbReference type="SMR" id="Q9PVQ9"/>
<dbReference type="FunCoup" id="Q9PVQ9">
    <property type="interactions" value="102"/>
</dbReference>
<dbReference type="STRING" id="8090.ENSORLP00000009954"/>
<dbReference type="GeneID" id="100529157"/>
<dbReference type="KEGG" id="ola:100529157"/>
<dbReference type="CTD" id="58043"/>
<dbReference type="InParanoid" id="Q9PVQ9"/>
<dbReference type="OrthoDB" id="6159439at2759"/>
<dbReference type="Proteomes" id="UP000001038">
    <property type="component" value="Unplaced"/>
</dbReference>
<dbReference type="Proteomes" id="UP000265180">
    <property type="component" value="Chromosome 9"/>
</dbReference>
<dbReference type="Proteomes" id="UP000265200">
    <property type="component" value="Chromosome 9"/>
</dbReference>
<dbReference type="GO" id="GO:0005634">
    <property type="term" value="C:nucleus"/>
    <property type="evidence" value="ECO:0000318"/>
    <property type="project" value="GO_Central"/>
</dbReference>
<dbReference type="GO" id="GO:0003700">
    <property type="term" value="F:DNA-binding transcription factor activity"/>
    <property type="evidence" value="ECO:0000318"/>
    <property type="project" value="GO_Central"/>
</dbReference>
<dbReference type="GO" id="GO:0000981">
    <property type="term" value="F:DNA-binding transcription factor activity, RNA polymerase II-specific"/>
    <property type="evidence" value="ECO:0007669"/>
    <property type="project" value="InterPro"/>
</dbReference>
<dbReference type="GO" id="GO:0000978">
    <property type="term" value="F:RNA polymerase II cis-regulatory region sequence-specific DNA binding"/>
    <property type="evidence" value="ECO:0000318"/>
    <property type="project" value="GO_Central"/>
</dbReference>
<dbReference type="GO" id="GO:0009952">
    <property type="term" value="P:anterior/posterior pattern specification"/>
    <property type="evidence" value="ECO:0000318"/>
    <property type="project" value="GO_Central"/>
</dbReference>
<dbReference type="GO" id="GO:0006351">
    <property type="term" value="P:DNA-templated transcription"/>
    <property type="evidence" value="ECO:0007669"/>
    <property type="project" value="InterPro"/>
</dbReference>
<dbReference type="GO" id="GO:0048704">
    <property type="term" value="P:embryonic skeletal system morphogenesis"/>
    <property type="evidence" value="ECO:0000318"/>
    <property type="project" value="GO_Central"/>
</dbReference>
<dbReference type="GO" id="GO:0009954">
    <property type="term" value="P:proximal/distal pattern formation"/>
    <property type="evidence" value="ECO:0000318"/>
    <property type="project" value="GO_Central"/>
</dbReference>
<dbReference type="GO" id="GO:0006357">
    <property type="term" value="P:regulation of transcription by RNA polymerase II"/>
    <property type="evidence" value="ECO:0000318"/>
    <property type="project" value="GO_Central"/>
</dbReference>
<dbReference type="CDD" id="cd00086">
    <property type="entry name" value="homeodomain"/>
    <property type="match status" value="1"/>
</dbReference>
<dbReference type="FunFam" id="1.10.10.60:FF:000018">
    <property type="entry name" value="Homeobox A10"/>
    <property type="match status" value="1"/>
</dbReference>
<dbReference type="Gene3D" id="1.10.10.60">
    <property type="entry name" value="Homeodomain-like"/>
    <property type="match status" value="1"/>
</dbReference>
<dbReference type="InterPro" id="IPR050803">
    <property type="entry name" value="Abd-B_homeobox_TF"/>
</dbReference>
<dbReference type="InterPro" id="IPR001356">
    <property type="entry name" value="HD"/>
</dbReference>
<dbReference type="InterPro" id="IPR020479">
    <property type="entry name" value="HD_metazoa"/>
</dbReference>
<dbReference type="InterPro" id="IPR017970">
    <property type="entry name" value="Homeobox_CS"/>
</dbReference>
<dbReference type="InterPro" id="IPR009057">
    <property type="entry name" value="Homeodomain-like_sf"/>
</dbReference>
<dbReference type="InterPro" id="IPR006711">
    <property type="entry name" value="Hox9_activation_N"/>
</dbReference>
<dbReference type="InterPro" id="IPR017112">
    <property type="entry name" value="HXA9/HXB9/HXC9"/>
</dbReference>
<dbReference type="PANTHER" id="PTHR45970">
    <property type="entry name" value="AGAP004664-PA"/>
    <property type="match status" value="1"/>
</dbReference>
<dbReference type="PANTHER" id="PTHR45970:SF1">
    <property type="entry name" value="HOMEOBOX PROTEIN HOX-C9"/>
    <property type="match status" value="1"/>
</dbReference>
<dbReference type="Pfam" id="PF00046">
    <property type="entry name" value="Homeodomain"/>
    <property type="match status" value="1"/>
</dbReference>
<dbReference type="Pfam" id="PF04617">
    <property type="entry name" value="Hox9_act"/>
    <property type="match status" value="1"/>
</dbReference>
<dbReference type="PIRSF" id="PIRSF037109">
    <property type="entry name" value="Homeobox_Hox9"/>
    <property type="match status" value="1"/>
</dbReference>
<dbReference type="PRINTS" id="PR00024">
    <property type="entry name" value="HOMEOBOX"/>
</dbReference>
<dbReference type="SMART" id="SM00389">
    <property type="entry name" value="HOX"/>
    <property type="match status" value="1"/>
</dbReference>
<dbReference type="SUPFAM" id="SSF46689">
    <property type="entry name" value="Homeodomain-like"/>
    <property type="match status" value="1"/>
</dbReference>
<dbReference type="PROSITE" id="PS00027">
    <property type="entry name" value="HOMEOBOX_1"/>
    <property type="match status" value="1"/>
</dbReference>
<dbReference type="PROSITE" id="PS50071">
    <property type="entry name" value="HOMEOBOX_2"/>
    <property type="match status" value="1"/>
</dbReference>
<accession>Q9PVQ9</accession>
<sequence length="262" mass="29891">MSTTGPITNYYVDSLINHESGDVIAAARFSAPGSHPAGPRPTSLVPECGDYPSCSFAPKPPVFSSSWAPVHSQSSVVYHPYSHQPHLSTDSRYMRSWLEPISGAVPFHGYPGNGRHYGLKPDAFPDHRAGECLGTNGRTYTDYLYCSSTDMRDKTQQNAPSPESELLTSGKHKEEKPELDPNNPVANWIHARSTRKKRCPYTKYQTLELEKEFLFNMYLTRDRRYEVARVLNLTERQVKIWFQNRRMKMKKMNKEKGDSKDQ</sequence>
<gene>
    <name type="primary">hoxc9</name>
    <name type="synonym">hoxc9a</name>
</gene>
<name>HXC9_ORYLA</name>
<keyword id="KW-0217">Developmental protein</keyword>
<keyword id="KW-0238">DNA-binding</keyword>
<keyword id="KW-0371">Homeobox</keyword>
<keyword id="KW-0539">Nucleus</keyword>
<keyword id="KW-1185">Reference proteome</keyword>
<keyword id="KW-0804">Transcription</keyword>
<keyword id="KW-0805">Transcription regulation</keyword>
<evidence type="ECO:0000250" key="1"/>
<evidence type="ECO:0000255" key="2">
    <source>
        <dbReference type="PROSITE-ProRule" id="PRU00108"/>
    </source>
</evidence>
<evidence type="ECO:0000256" key="3">
    <source>
        <dbReference type="SAM" id="MobiDB-lite"/>
    </source>
</evidence>
<evidence type="ECO:0000305" key="4"/>